<name>TRUB_NEIG2</name>
<dbReference type="EC" id="5.4.99.25" evidence="1"/>
<dbReference type="EMBL" id="CP001050">
    <property type="protein sequence ID" value="ACF29947.1"/>
    <property type="molecule type" value="Genomic_DNA"/>
</dbReference>
<dbReference type="RefSeq" id="WP_003701393.1">
    <property type="nucleotide sequence ID" value="NC_011035.1"/>
</dbReference>
<dbReference type="SMR" id="B4RMB1"/>
<dbReference type="KEGG" id="ngk:NGK_1271"/>
<dbReference type="HOGENOM" id="CLU_032087_0_3_4"/>
<dbReference type="Proteomes" id="UP000002564">
    <property type="component" value="Chromosome"/>
</dbReference>
<dbReference type="GO" id="GO:0003723">
    <property type="term" value="F:RNA binding"/>
    <property type="evidence" value="ECO:0007669"/>
    <property type="project" value="InterPro"/>
</dbReference>
<dbReference type="GO" id="GO:0160148">
    <property type="term" value="F:tRNA pseudouridine(55) synthase activity"/>
    <property type="evidence" value="ECO:0007669"/>
    <property type="project" value="UniProtKB-EC"/>
</dbReference>
<dbReference type="GO" id="GO:1990481">
    <property type="term" value="P:mRNA pseudouridine synthesis"/>
    <property type="evidence" value="ECO:0007669"/>
    <property type="project" value="TreeGrafter"/>
</dbReference>
<dbReference type="GO" id="GO:0031119">
    <property type="term" value="P:tRNA pseudouridine synthesis"/>
    <property type="evidence" value="ECO:0007669"/>
    <property type="project" value="UniProtKB-UniRule"/>
</dbReference>
<dbReference type="CDD" id="cd02573">
    <property type="entry name" value="PseudoU_synth_EcTruB"/>
    <property type="match status" value="1"/>
</dbReference>
<dbReference type="CDD" id="cd21152">
    <property type="entry name" value="PUA_TruB_bacterial"/>
    <property type="match status" value="1"/>
</dbReference>
<dbReference type="FunFam" id="3.30.2350.10:FF:000011">
    <property type="entry name" value="tRNA pseudouridine synthase B"/>
    <property type="match status" value="1"/>
</dbReference>
<dbReference type="Gene3D" id="3.30.2350.10">
    <property type="entry name" value="Pseudouridine synthase"/>
    <property type="match status" value="1"/>
</dbReference>
<dbReference type="Gene3D" id="2.30.130.10">
    <property type="entry name" value="PUA domain"/>
    <property type="match status" value="1"/>
</dbReference>
<dbReference type="HAMAP" id="MF_01080">
    <property type="entry name" value="TruB_bact"/>
    <property type="match status" value="1"/>
</dbReference>
<dbReference type="InterPro" id="IPR020103">
    <property type="entry name" value="PsdUridine_synth_cat_dom_sf"/>
</dbReference>
<dbReference type="InterPro" id="IPR002501">
    <property type="entry name" value="PsdUridine_synth_N"/>
</dbReference>
<dbReference type="InterPro" id="IPR015947">
    <property type="entry name" value="PUA-like_sf"/>
</dbReference>
<dbReference type="InterPro" id="IPR036974">
    <property type="entry name" value="PUA_sf"/>
</dbReference>
<dbReference type="InterPro" id="IPR014780">
    <property type="entry name" value="tRNA_psdUridine_synth_TruB"/>
</dbReference>
<dbReference type="InterPro" id="IPR015240">
    <property type="entry name" value="tRNA_sdUridine_synth_fam1_C"/>
</dbReference>
<dbReference type="InterPro" id="IPR032819">
    <property type="entry name" value="TruB_C"/>
</dbReference>
<dbReference type="NCBIfam" id="TIGR00431">
    <property type="entry name" value="TruB"/>
    <property type="match status" value="1"/>
</dbReference>
<dbReference type="PANTHER" id="PTHR13767:SF2">
    <property type="entry name" value="PSEUDOURIDYLATE SYNTHASE TRUB1"/>
    <property type="match status" value="1"/>
</dbReference>
<dbReference type="PANTHER" id="PTHR13767">
    <property type="entry name" value="TRNA-PSEUDOURIDINE SYNTHASE"/>
    <property type="match status" value="1"/>
</dbReference>
<dbReference type="Pfam" id="PF09157">
    <property type="entry name" value="TruB-C_2"/>
    <property type="match status" value="1"/>
</dbReference>
<dbReference type="Pfam" id="PF16198">
    <property type="entry name" value="TruB_C_2"/>
    <property type="match status" value="1"/>
</dbReference>
<dbReference type="Pfam" id="PF01509">
    <property type="entry name" value="TruB_N"/>
    <property type="match status" value="1"/>
</dbReference>
<dbReference type="SUPFAM" id="SSF55120">
    <property type="entry name" value="Pseudouridine synthase"/>
    <property type="match status" value="1"/>
</dbReference>
<dbReference type="SUPFAM" id="SSF88697">
    <property type="entry name" value="PUA domain-like"/>
    <property type="match status" value="1"/>
</dbReference>
<organism>
    <name type="scientific">Neisseria gonorrhoeae (strain NCCP11945)</name>
    <dbReference type="NCBI Taxonomy" id="521006"/>
    <lineage>
        <taxon>Bacteria</taxon>
        <taxon>Pseudomonadati</taxon>
        <taxon>Pseudomonadota</taxon>
        <taxon>Betaproteobacteria</taxon>
        <taxon>Neisseriales</taxon>
        <taxon>Neisseriaceae</taxon>
        <taxon>Neisseria</taxon>
    </lineage>
</organism>
<evidence type="ECO:0000255" key="1">
    <source>
        <dbReference type="HAMAP-Rule" id="MF_01080"/>
    </source>
</evidence>
<gene>
    <name evidence="1" type="primary">truB</name>
    <name type="ordered locus">NGK_1271</name>
</gene>
<keyword id="KW-0413">Isomerase</keyword>
<keyword id="KW-0819">tRNA processing</keyword>
<accession>B4RMB1</accession>
<feature type="chain" id="PRO_1000136815" description="tRNA pseudouridine synthase B">
    <location>
        <begin position="1"/>
        <end position="306"/>
    </location>
</feature>
<feature type="active site" description="Nucleophile" evidence="1">
    <location>
        <position position="47"/>
    </location>
</feature>
<comment type="function">
    <text evidence="1">Responsible for synthesis of pseudouridine from uracil-55 in the psi GC loop of transfer RNAs.</text>
</comment>
<comment type="catalytic activity">
    <reaction evidence="1">
        <text>uridine(55) in tRNA = pseudouridine(55) in tRNA</text>
        <dbReference type="Rhea" id="RHEA:42532"/>
        <dbReference type="Rhea" id="RHEA-COMP:10101"/>
        <dbReference type="Rhea" id="RHEA-COMP:10102"/>
        <dbReference type="ChEBI" id="CHEBI:65314"/>
        <dbReference type="ChEBI" id="CHEBI:65315"/>
        <dbReference type="EC" id="5.4.99.25"/>
    </reaction>
</comment>
<comment type="similarity">
    <text evidence="1">Belongs to the pseudouridine synthase TruB family. Type 1 subfamily.</text>
</comment>
<protein>
    <recommendedName>
        <fullName evidence="1">tRNA pseudouridine synthase B</fullName>
        <ecNumber evidence="1">5.4.99.25</ecNumber>
    </recommendedName>
    <alternativeName>
        <fullName evidence="1">tRNA pseudouridine(55) synthase</fullName>
        <shortName evidence="1">Psi55 synthase</shortName>
    </alternativeName>
    <alternativeName>
        <fullName evidence="1">tRNA pseudouridylate synthase</fullName>
    </alternativeName>
    <alternativeName>
        <fullName evidence="1">tRNA-uridine isomerase</fullName>
    </alternativeName>
</protein>
<proteinExistence type="inferred from homology"/>
<sequence>MTNKPAKRPVNGVLLLDKPEGLSSNTALQKARRLFHAEKAGHTGVLDPLATGLLPVCFGEAAKFAQYLLDADKAYTATLKLGEASSTGDAEGEIIAAARADISLAEFQTACQALTGNIRQVPPMFSALKHEGKPLYEYARKGIVIERKPRDITVYSIDIAEFDAPKAVISVRCSKGTYIRTLSEGIAKHIGTFAHLTALRRTETAGFTIAQSHTLEALANLDETERDNLLLPCDVLVSHFPQTVLNDYAVHMLQCGQRPRFEEDLPSDTPVRVYTENGRFVGLAEYQKEICRMKALRLMNTAASSA</sequence>
<reference key="1">
    <citation type="journal article" date="2008" name="J. Bacteriol.">
        <title>Complete genome sequence of Neisseria gonorrhoeae NCCP11945.</title>
        <authorList>
            <person name="Chung G.T."/>
            <person name="Yoo J.S."/>
            <person name="Oh H.B."/>
            <person name="Lee Y.S."/>
            <person name="Cha S.H."/>
            <person name="Kim S.J."/>
            <person name="Yoo C.K."/>
        </authorList>
    </citation>
    <scope>NUCLEOTIDE SEQUENCE [LARGE SCALE GENOMIC DNA]</scope>
    <source>
        <strain>NCCP11945</strain>
    </source>
</reference>